<comment type="catalytic activity">
    <reaction evidence="1">
        <text>tRNA(Arg) + L-arginine + ATP = L-arginyl-tRNA(Arg) + AMP + diphosphate</text>
        <dbReference type="Rhea" id="RHEA:20301"/>
        <dbReference type="Rhea" id="RHEA-COMP:9658"/>
        <dbReference type="Rhea" id="RHEA-COMP:9673"/>
        <dbReference type="ChEBI" id="CHEBI:30616"/>
        <dbReference type="ChEBI" id="CHEBI:32682"/>
        <dbReference type="ChEBI" id="CHEBI:33019"/>
        <dbReference type="ChEBI" id="CHEBI:78442"/>
        <dbReference type="ChEBI" id="CHEBI:78513"/>
        <dbReference type="ChEBI" id="CHEBI:456215"/>
        <dbReference type="EC" id="6.1.1.19"/>
    </reaction>
</comment>
<comment type="subunit">
    <text evidence="1">Monomer.</text>
</comment>
<comment type="subcellular location">
    <subcellularLocation>
        <location evidence="1">Cytoplasm</location>
    </subcellularLocation>
</comment>
<comment type="similarity">
    <text evidence="1">Belongs to the class-I aminoacyl-tRNA synthetase family.</text>
</comment>
<feature type="chain" id="PRO_0000242062" description="Arginine--tRNA ligase">
    <location>
        <begin position="1"/>
        <end position="554"/>
    </location>
</feature>
<feature type="short sequence motif" description="'HIGH' region">
    <location>
        <begin position="129"/>
        <end position="139"/>
    </location>
</feature>
<organism>
    <name type="scientific">Syntrophotalea carbinolica (strain DSM 2380 / NBRC 103641 / GraBd1)</name>
    <name type="common">Pelobacter carbinolicus</name>
    <dbReference type="NCBI Taxonomy" id="338963"/>
    <lineage>
        <taxon>Bacteria</taxon>
        <taxon>Pseudomonadati</taxon>
        <taxon>Thermodesulfobacteriota</taxon>
        <taxon>Desulfuromonadia</taxon>
        <taxon>Desulfuromonadales</taxon>
        <taxon>Syntrophotaleaceae</taxon>
        <taxon>Syntrophotalea</taxon>
    </lineage>
</organism>
<evidence type="ECO:0000255" key="1">
    <source>
        <dbReference type="HAMAP-Rule" id="MF_00123"/>
    </source>
</evidence>
<dbReference type="EC" id="6.1.1.19" evidence="1"/>
<dbReference type="EMBL" id="CP000142">
    <property type="protein sequence ID" value="ABA88001.1"/>
    <property type="molecule type" value="Genomic_DNA"/>
</dbReference>
<dbReference type="RefSeq" id="WP_011340444.1">
    <property type="nucleotide sequence ID" value="NC_007498.2"/>
</dbReference>
<dbReference type="SMR" id="Q3A6K6"/>
<dbReference type="STRING" id="338963.Pcar_0742"/>
<dbReference type="KEGG" id="pca:Pcar_0742"/>
<dbReference type="eggNOG" id="COG0018">
    <property type="taxonomic scope" value="Bacteria"/>
</dbReference>
<dbReference type="HOGENOM" id="CLU_006406_0_1_7"/>
<dbReference type="OrthoDB" id="9803211at2"/>
<dbReference type="Proteomes" id="UP000002534">
    <property type="component" value="Chromosome"/>
</dbReference>
<dbReference type="GO" id="GO:0005737">
    <property type="term" value="C:cytoplasm"/>
    <property type="evidence" value="ECO:0007669"/>
    <property type="project" value="UniProtKB-SubCell"/>
</dbReference>
<dbReference type="GO" id="GO:0004814">
    <property type="term" value="F:arginine-tRNA ligase activity"/>
    <property type="evidence" value="ECO:0007669"/>
    <property type="project" value="UniProtKB-UniRule"/>
</dbReference>
<dbReference type="GO" id="GO:0005524">
    <property type="term" value="F:ATP binding"/>
    <property type="evidence" value="ECO:0007669"/>
    <property type="project" value="UniProtKB-UniRule"/>
</dbReference>
<dbReference type="GO" id="GO:0006420">
    <property type="term" value="P:arginyl-tRNA aminoacylation"/>
    <property type="evidence" value="ECO:0007669"/>
    <property type="project" value="UniProtKB-UniRule"/>
</dbReference>
<dbReference type="CDD" id="cd07956">
    <property type="entry name" value="Anticodon_Ia_Arg"/>
    <property type="match status" value="1"/>
</dbReference>
<dbReference type="CDD" id="cd00671">
    <property type="entry name" value="ArgRS_core"/>
    <property type="match status" value="1"/>
</dbReference>
<dbReference type="FunFam" id="1.10.730.10:FF:000008">
    <property type="entry name" value="Arginine--tRNA ligase"/>
    <property type="match status" value="1"/>
</dbReference>
<dbReference type="FunFam" id="3.30.1360.70:FF:000003">
    <property type="entry name" value="Arginine--tRNA ligase"/>
    <property type="match status" value="1"/>
</dbReference>
<dbReference type="FunFam" id="3.40.50.620:FF:000062">
    <property type="entry name" value="Arginine--tRNA ligase"/>
    <property type="match status" value="1"/>
</dbReference>
<dbReference type="Gene3D" id="3.30.1360.70">
    <property type="entry name" value="Arginyl tRNA synthetase N-terminal domain"/>
    <property type="match status" value="1"/>
</dbReference>
<dbReference type="Gene3D" id="3.40.50.620">
    <property type="entry name" value="HUPs"/>
    <property type="match status" value="1"/>
</dbReference>
<dbReference type="Gene3D" id="1.10.730.10">
    <property type="entry name" value="Isoleucyl-tRNA Synthetase, Domain 1"/>
    <property type="match status" value="1"/>
</dbReference>
<dbReference type="HAMAP" id="MF_00123">
    <property type="entry name" value="Arg_tRNA_synth"/>
    <property type="match status" value="1"/>
</dbReference>
<dbReference type="InterPro" id="IPR001412">
    <property type="entry name" value="aa-tRNA-synth_I_CS"/>
</dbReference>
<dbReference type="InterPro" id="IPR001278">
    <property type="entry name" value="Arg-tRNA-ligase"/>
</dbReference>
<dbReference type="InterPro" id="IPR005148">
    <property type="entry name" value="Arg-tRNA-synth_N"/>
</dbReference>
<dbReference type="InterPro" id="IPR036695">
    <property type="entry name" value="Arg-tRNA-synth_N_sf"/>
</dbReference>
<dbReference type="InterPro" id="IPR035684">
    <property type="entry name" value="ArgRS_core"/>
</dbReference>
<dbReference type="InterPro" id="IPR008909">
    <property type="entry name" value="DALR_anticod-bd"/>
</dbReference>
<dbReference type="InterPro" id="IPR014729">
    <property type="entry name" value="Rossmann-like_a/b/a_fold"/>
</dbReference>
<dbReference type="InterPro" id="IPR009080">
    <property type="entry name" value="tRNAsynth_Ia_anticodon-bd"/>
</dbReference>
<dbReference type="NCBIfam" id="TIGR00456">
    <property type="entry name" value="argS"/>
    <property type="match status" value="1"/>
</dbReference>
<dbReference type="PANTHER" id="PTHR11956:SF5">
    <property type="entry name" value="ARGININE--TRNA LIGASE, CYTOPLASMIC"/>
    <property type="match status" value="1"/>
</dbReference>
<dbReference type="PANTHER" id="PTHR11956">
    <property type="entry name" value="ARGINYL-TRNA SYNTHETASE"/>
    <property type="match status" value="1"/>
</dbReference>
<dbReference type="Pfam" id="PF03485">
    <property type="entry name" value="Arg_tRNA_synt_N"/>
    <property type="match status" value="1"/>
</dbReference>
<dbReference type="Pfam" id="PF05746">
    <property type="entry name" value="DALR_1"/>
    <property type="match status" value="1"/>
</dbReference>
<dbReference type="Pfam" id="PF00750">
    <property type="entry name" value="tRNA-synt_1d"/>
    <property type="match status" value="1"/>
</dbReference>
<dbReference type="PRINTS" id="PR01038">
    <property type="entry name" value="TRNASYNTHARG"/>
</dbReference>
<dbReference type="SMART" id="SM01016">
    <property type="entry name" value="Arg_tRNA_synt_N"/>
    <property type="match status" value="1"/>
</dbReference>
<dbReference type="SMART" id="SM00836">
    <property type="entry name" value="DALR_1"/>
    <property type="match status" value="1"/>
</dbReference>
<dbReference type="SUPFAM" id="SSF47323">
    <property type="entry name" value="Anticodon-binding domain of a subclass of class I aminoacyl-tRNA synthetases"/>
    <property type="match status" value="1"/>
</dbReference>
<dbReference type="SUPFAM" id="SSF55190">
    <property type="entry name" value="Arginyl-tRNA synthetase (ArgRS), N-terminal 'additional' domain"/>
    <property type="match status" value="1"/>
</dbReference>
<dbReference type="SUPFAM" id="SSF52374">
    <property type="entry name" value="Nucleotidylyl transferase"/>
    <property type="match status" value="1"/>
</dbReference>
<dbReference type="PROSITE" id="PS00178">
    <property type="entry name" value="AA_TRNA_LIGASE_I"/>
    <property type="match status" value="1"/>
</dbReference>
<gene>
    <name evidence="1" type="primary">argS</name>
    <name type="ordered locus">Pcar_0742</name>
</gene>
<proteinExistence type="inferred from homology"/>
<accession>Q3A6K6</accession>
<name>SYR_SYNC1</name>
<keyword id="KW-0030">Aminoacyl-tRNA synthetase</keyword>
<keyword id="KW-0067">ATP-binding</keyword>
<keyword id="KW-0963">Cytoplasm</keyword>
<keyword id="KW-0436">Ligase</keyword>
<keyword id="KW-0547">Nucleotide-binding</keyword>
<keyword id="KW-0648">Protein biosynthesis</keyword>
<keyword id="KW-1185">Reference proteome</keyword>
<reference key="1">
    <citation type="submission" date="2005-10" db="EMBL/GenBank/DDBJ databases">
        <title>Complete sequence of Pelobacter carbinolicus DSM 2380.</title>
        <authorList>
            <person name="Copeland A."/>
            <person name="Lucas S."/>
            <person name="Lapidus A."/>
            <person name="Barry K."/>
            <person name="Detter J.C."/>
            <person name="Glavina T."/>
            <person name="Hammon N."/>
            <person name="Israni S."/>
            <person name="Pitluck S."/>
            <person name="Chertkov O."/>
            <person name="Schmutz J."/>
            <person name="Larimer F."/>
            <person name="Land M."/>
            <person name="Kyrpides N."/>
            <person name="Ivanova N."/>
            <person name="Richardson P."/>
        </authorList>
    </citation>
    <scope>NUCLEOTIDE SEQUENCE [LARGE SCALE GENOMIC DNA]</scope>
    <source>
        <strain>DSM 2380 / NBRC 103641 / GraBd1</strain>
    </source>
</reference>
<sequence length="554" mass="62387">MKQRLRQYIGEALQACFDQQQLHSGTIPEINLEVPAHAEHGDFSTNVAMAMARAEKKAPRKIAETIVAALGEGGGMWSRVEIAGPGFINFYLTPRCWFGVLDEVVRRGDLFGRTHTGNGRKVQVEFVSANPTGPLHIGHGRGAATGDAVAAVLGAAGYEVQREYYINDAGNQMLTLGRSLLLRYRELLGETIEFPTDCYQGVYVIDLAREVLESEGERLRDLPEEEALRFFANYGGDKIRAGIDEDLAAFGVRFDNWYSEQSLYDRQEVERGIALLKERGLTYEKDGAIWFRTTDYGDDKDRVLIRSNGATTYFASDVAYHKEKFERGFDTVIDVWGADHHGYVPRMKAVLAGLDRNPEDLQIILVQLVNLLRGGQQVAMSTRSGEFVTLREVIDEVGRDACRFFFLMRRSDSQLDFDLDLAKKQSTENPVYYVQYAHARVCSINRNAEDQGVAMPELGEVDFDCLTLEDELALTKLLSRYPEVVDGAAEHFEPHRVVFYLQELAARFHSYYNKGRVLVDDPDVSRARLYLVNCVRTVLHNALVLLGVSAPERM</sequence>
<protein>
    <recommendedName>
        <fullName evidence="1">Arginine--tRNA ligase</fullName>
        <ecNumber evidence="1">6.1.1.19</ecNumber>
    </recommendedName>
    <alternativeName>
        <fullName evidence="1">Arginyl-tRNA synthetase</fullName>
        <shortName evidence="1">ArgRS</shortName>
    </alternativeName>
</protein>